<evidence type="ECO:0000305" key="1"/>
<organismHost>
    <name type="scientific">Camelus dromedarius</name>
    <name type="common">Dromedary</name>
    <name type="synonym">Arabian camel</name>
    <dbReference type="NCBI Taxonomy" id="9838"/>
</organismHost>
<organismHost>
    <name type="scientific">Canis lupus familiaris</name>
    <name type="common">Dog</name>
    <name type="synonym">Canis familiaris</name>
    <dbReference type="NCBI Taxonomy" id="9615"/>
</organismHost>
<organismHost>
    <name type="scientific">Equus asinus</name>
    <name type="common">Donkey</name>
    <name type="synonym">Equus africanus asinus</name>
    <dbReference type="NCBI Taxonomy" id="9793"/>
</organismHost>
<organismHost>
    <name type="scientific">Equus caballus</name>
    <name type="common">Horse</name>
    <dbReference type="NCBI Taxonomy" id="9796"/>
</organismHost>
<organismHost>
    <name type="scientific">Equus hemionus</name>
    <name type="common">Onager</name>
    <name type="synonym">Asian wild ass</name>
    <dbReference type="NCBI Taxonomy" id="9794"/>
</organismHost>
<organismHost>
    <name type="scientific">Equus quagga burchellii</name>
    <name type="common">Burchell's zebra</name>
    <name type="synonym">Equus burchelli</name>
    <dbReference type="NCBI Taxonomy" id="89252"/>
</organismHost>
<organismHost>
    <name type="scientific">Loxodonta africana</name>
    <name type="common">African elephant</name>
    <dbReference type="NCBI Taxonomy" id="9785"/>
</organismHost>
<dbReference type="EMBL" id="M94680">
    <property type="protein sequence ID" value="AAA42537.1"/>
    <property type="molecule type" value="Genomic_RNA"/>
</dbReference>
<dbReference type="EMBL" id="D26570">
    <property type="protein sequence ID" value="BAA05619.1"/>
    <property type="molecule type" value="Genomic_RNA"/>
</dbReference>
<dbReference type="EMBL" id="U21956">
    <property type="protein sequence ID" value="AAA67288.1"/>
    <property type="molecule type" value="Genomic_RNA"/>
</dbReference>
<dbReference type="EMBL" id="M90697">
    <property type="protein sequence ID" value="AAA42541.1"/>
    <property type="molecule type" value="Genomic_RNA"/>
</dbReference>
<dbReference type="PIR" id="A36820">
    <property type="entry name" value="P2XRA4"/>
</dbReference>
<dbReference type="PIR" id="S27891">
    <property type="entry name" value="S27891"/>
</dbReference>
<dbReference type="GO" id="GO:0039625">
    <property type="term" value="C:viral inner capsid"/>
    <property type="evidence" value="ECO:0007669"/>
    <property type="project" value="UniProtKB-KW"/>
</dbReference>
<dbReference type="GO" id="GO:0005198">
    <property type="term" value="F:structural molecule activity"/>
    <property type="evidence" value="ECO:0007669"/>
    <property type="project" value="InterPro"/>
</dbReference>
<dbReference type="InterPro" id="IPR001742">
    <property type="entry name" value="Capsid_VP2_Orbivir"/>
</dbReference>
<dbReference type="Pfam" id="PF00898">
    <property type="entry name" value="Orbi_VP2"/>
    <property type="match status" value="1"/>
</dbReference>
<feature type="chain" id="PRO_0000222689" description="Outer capsid protein VP2">
    <location>
        <begin position="1"/>
        <end position="1060"/>
    </location>
</feature>
<feature type="sequence conflict" description="In Ref. 2; BAA05619." evidence="1" ref="2">
    <original>MTN</original>
    <variation>LTD</variation>
    <location>
        <begin position="9"/>
        <end position="11"/>
    </location>
</feature>
<feature type="sequence conflict" description="In Ref. 3; AAA67288." evidence="1" ref="3">
    <original>M</original>
    <variation>L</variation>
    <location>
        <position position="9"/>
    </location>
</feature>
<feature type="sequence conflict" description="In Ref. 3; AAA67288." evidence="1" ref="3">
    <original>K</original>
    <variation>T</variation>
    <location>
        <position position="30"/>
    </location>
</feature>
<feature type="sequence conflict" description="In Ref. 2; BAA05619." evidence="1" ref="2">
    <original>Y</original>
    <variation>F</variation>
    <location>
        <position position="158"/>
    </location>
</feature>
<feature type="sequence conflict" description="In Ref. 2; BAA05619." evidence="1" ref="2">
    <original>K</original>
    <variation>G</variation>
    <location>
        <position position="163"/>
    </location>
</feature>
<feature type="sequence conflict" description="In Ref. 2; BAA05619." evidence="1" ref="2">
    <original>D</original>
    <variation>N</variation>
    <location>
        <position position="169"/>
    </location>
</feature>
<feature type="sequence conflict" description="In Ref. 2; BAA05619." evidence="1" ref="2">
    <original>V</original>
    <variation>I</variation>
    <location>
        <position position="176"/>
    </location>
</feature>
<feature type="sequence conflict" description="In Ref. 3; AAA67288." evidence="1" ref="3">
    <original>Q</original>
    <variation>K</variation>
    <location>
        <position position="178"/>
    </location>
</feature>
<feature type="sequence conflict" description="In Ref. 2; BAA05619." evidence="1" ref="2">
    <original>I</original>
    <variation>A</variation>
    <location>
        <position position="190"/>
    </location>
</feature>
<feature type="sequence conflict" description="In Ref. 2; BAA05619." evidence="1" ref="2">
    <original>E</original>
    <variation>Q</variation>
    <location>
        <position position="196"/>
    </location>
</feature>
<feature type="sequence conflict" description="In Ref. 4; AAA42541." evidence="1" ref="4">
    <original>PNKG</original>
    <variation>QIR</variation>
    <location>
        <begin position="232"/>
        <end position="235"/>
    </location>
</feature>
<feature type="sequence conflict" description="In Ref. 3; AAA67288." evidence="1" ref="3">
    <original>K</original>
    <variation>L</variation>
    <location>
        <position position="261"/>
    </location>
</feature>
<feature type="sequence conflict" description="In Ref. 2; BAA05619." evidence="1" ref="2">
    <original>A</original>
    <variation>S</variation>
    <location>
        <position position="295"/>
    </location>
</feature>
<feature type="sequence conflict" description="In Ref. 2; BAA05619." evidence="1" ref="2">
    <original>IE</original>
    <variation>VD</variation>
    <location>
        <begin position="304"/>
        <end position="305"/>
    </location>
</feature>
<feature type="sequence conflict" description="In Ref. 2; BAA05619." evidence="1" ref="2">
    <original>A</original>
    <variation>T</variation>
    <location>
        <position position="331"/>
    </location>
</feature>
<feature type="sequence conflict" description="In Ref. 2; BAA05619." evidence="1" ref="2">
    <original>G</original>
    <variation>R</variation>
    <location>
        <position position="342"/>
    </location>
</feature>
<feature type="sequence conflict" description="In Ref. 1; AAA42537." evidence="1" ref="1">
    <original>M</original>
    <variation>K</variation>
    <location>
        <position position="346"/>
    </location>
</feature>
<feature type="sequence conflict" description="In Ref. 2; BAA05619." evidence="1" ref="2">
    <original>G</original>
    <variation>R</variation>
    <location>
        <position position="357"/>
    </location>
</feature>
<feature type="sequence conflict" description="In Ref. 2; BAA05619." evidence="1" ref="2">
    <original>R</original>
    <variation>K</variation>
    <location>
        <position position="360"/>
    </location>
</feature>
<feature type="sequence conflict" description="In Ref. 2; BAA05619." evidence="1" ref="2">
    <original>G</original>
    <variation>N</variation>
    <location>
        <position position="384"/>
    </location>
</feature>
<feature type="sequence conflict" description="In Ref. 2; BAA05619." evidence="1" ref="2">
    <original>K</original>
    <variation>R</variation>
    <location>
        <position position="396"/>
    </location>
</feature>
<feature type="sequence conflict" description="In Ref. 2; BAA05619." evidence="1" ref="2">
    <original>T</original>
    <variation>N</variation>
    <location>
        <position position="402"/>
    </location>
</feature>
<feature type="sequence conflict" description="In Ref. 2; BAA05619." evidence="1" ref="2">
    <original>V</original>
    <variation>I</variation>
    <location>
        <position position="418"/>
    </location>
</feature>
<feature type="sequence conflict" description="In Ref. 3; AAA67288." evidence="1" ref="3">
    <original>V</original>
    <variation>I</variation>
    <location>
        <position position="427"/>
    </location>
</feature>
<feature type="sequence conflict" description="In Ref. 2; BAA05619." evidence="1" ref="2">
    <original>I</original>
    <variation>M</variation>
    <location>
        <position position="437"/>
    </location>
</feature>
<feature type="sequence conflict" description="In Ref. 2; BAA05619." evidence="1" ref="2">
    <original>S</original>
    <variation>G</variation>
    <location>
        <position position="466"/>
    </location>
</feature>
<feature type="sequence conflict" description="In Ref. 2; BAA05619 and 3; AAA67288." evidence="1" ref="2 3">
    <original>V</original>
    <variation>I</variation>
    <location>
        <position position="470"/>
    </location>
</feature>
<feature type="sequence conflict" description="In Ref. 4; AAA42541." evidence="1" ref="4">
    <original>AI</original>
    <variation>PF</variation>
    <location>
        <begin position="481"/>
        <end position="482"/>
    </location>
</feature>
<feature type="sequence conflict" description="In Ref. 2; BAA05619." evidence="1" ref="2">
    <original>T</original>
    <variation>I</variation>
    <location>
        <position position="489"/>
    </location>
</feature>
<feature type="sequence conflict" description="In Ref. 3; AAA67288." evidence="1" ref="3">
    <original>A</original>
    <variation>C</variation>
    <location>
        <position position="499"/>
    </location>
</feature>
<feature type="sequence conflict" description="In Ref. 2; BAA05619." evidence="1" ref="2">
    <original>A</original>
    <variation>T</variation>
    <location>
        <position position="555"/>
    </location>
</feature>
<feature type="sequence conflict" description="In Ref. 2; BAA05619." evidence="1" ref="2">
    <original>G</original>
    <variation>S</variation>
    <location>
        <position position="583"/>
    </location>
</feature>
<feature type="sequence conflict" description="In Ref. 2; BAA05619." evidence="1" ref="2">
    <original>G</original>
    <variation>E</variation>
    <location>
        <position position="587"/>
    </location>
</feature>
<feature type="sequence conflict" description="In Ref. 4; AAA42541." evidence="1" ref="4">
    <original>Y</original>
    <variation>N</variation>
    <location>
        <position position="602"/>
    </location>
</feature>
<feature type="sequence conflict" description="In Ref. 2; BAA05619." evidence="1" ref="2">
    <original>V</original>
    <variation>I</variation>
    <location>
        <position position="652"/>
    </location>
</feature>
<feature type="sequence conflict" description="In Ref. 2; BAA05619." evidence="1" ref="2">
    <original>L</original>
    <variation>P</variation>
    <location>
        <position position="662"/>
    </location>
</feature>
<feature type="sequence conflict" description="In Ref. 3; AAA67288." evidence="1" ref="3">
    <original>P</original>
    <variation>H</variation>
    <location>
        <position position="681"/>
    </location>
</feature>
<feature type="sequence conflict" description="In Ref. 3; AAA67288." evidence="1" ref="3">
    <original>A</original>
    <variation>T</variation>
    <location>
        <position position="691"/>
    </location>
</feature>
<feature type="sequence conflict" description="In Ref. 3; AAA67288." evidence="1" ref="3">
    <original>L</original>
    <variation>I</variation>
    <location>
        <position position="715"/>
    </location>
</feature>
<feature type="sequence conflict" description="In Ref. 2; BAA05619." evidence="1" ref="2">
    <original>S</original>
    <variation>P</variation>
    <location>
        <position position="730"/>
    </location>
</feature>
<feature type="sequence conflict" description="In Ref. 2; BAA05619." evidence="1" ref="2">
    <original>TFST</original>
    <variation>AYSM</variation>
    <location>
        <begin position="766"/>
        <end position="769"/>
    </location>
</feature>
<feature type="sequence conflict" description="In Ref. 2; BAA05619 and 3; AAA67288." evidence="1" ref="2 3">
    <original>K</original>
    <variation>E</variation>
    <location>
        <position position="780"/>
    </location>
</feature>
<feature type="sequence conflict" description="In Ref. 4; AAA42541." evidence="1" ref="4">
    <original>HYYLETLQRVFND</original>
    <variation>LIIWKLSNVSLTY</variation>
    <location>
        <begin position="789"/>
        <end position="801"/>
    </location>
</feature>
<feature type="sequence conflict" description="In Ref. 3; AAA67288." evidence="1" ref="3">
    <original>F</original>
    <variation>S</variation>
    <location>
        <position position="810"/>
    </location>
</feature>
<feature type="sequence conflict" description="In Ref. 2; BAA05619." evidence="1" ref="2">
    <original>R</original>
    <variation>K</variation>
    <location>
        <position position="813"/>
    </location>
</feature>
<feature type="sequence conflict" description="In Ref. 3; AAA67288." evidence="1" ref="3">
    <original>R</original>
    <variation>S</variation>
    <location>
        <position position="813"/>
    </location>
</feature>
<feature type="sequence conflict" description="In Ref. 2; BAA05619." evidence="1" ref="2">
    <original>D</original>
    <variation>N</variation>
    <location>
        <position position="816"/>
    </location>
</feature>
<feature type="sequence conflict" description="In Ref. 3; AAA67288." evidence="1" ref="3">
    <original>F</original>
    <variation>L</variation>
    <location>
        <position position="827"/>
    </location>
</feature>
<feature type="sequence conflict" description="In Ref. 2; BAA05619." evidence="1" ref="2">
    <original>H</original>
    <variation>Q</variation>
    <location>
        <position position="831"/>
    </location>
</feature>
<feature type="sequence conflict" description="In Ref. 2; BAA05619." evidence="1" ref="2">
    <original>E</original>
    <variation>Q</variation>
    <location>
        <position position="835"/>
    </location>
</feature>
<feature type="sequence conflict" description="In Ref. 2; BAA05619." evidence="1" ref="2">
    <original>Y</original>
    <variation>D</variation>
    <location>
        <position position="864"/>
    </location>
</feature>
<feature type="sequence conflict" description="In Ref. 2; BAA05619." evidence="1" ref="2">
    <original>R</original>
    <variation>G</variation>
    <location>
        <position position="878"/>
    </location>
</feature>
<feature type="sequence conflict" description="In Ref. 4; AAA42541." evidence="1" ref="4">
    <original>R</original>
    <variation>A</variation>
    <location>
        <position position="935"/>
    </location>
</feature>
<feature type="sequence conflict" description="In Ref. 2; BAA05619." evidence="1" ref="2">
    <original>V</original>
    <variation>A</variation>
    <location>
        <position position="980"/>
    </location>
</feature>
<comment type="function">
    <text>The VP2 protein is one of the two proteins (with VP5) which constitute the virus particle outer capsid. It is the major target of the host immunogenic response.</text>
</comment>
<comment type="subcellular location">
    <subcellularLocation>
        <location evidence="1">Virion</location>
    </subcellularLocation>
</comment>
<comment type="similarity">
    <text evidence="1">Belongs to the orbivirus VP2 family.</text>
</comment>
<protein>
    <recommendedName>
        <fullName>Outer capsid protein VP2</fullName>
    </recommendedName>
</protein>
<reference key="1">
    <citation type="journal article" date="1992" name="Virology">
        <title>Evolutionary relationships among the gnat-transmitted orbiviruses that cause African horse sickness, bluetongue, and epizootic hemorrhagic disease as evidenced by their capsid protein sequences.</title>
        <authorList>
            <person name="Iwata H."/>
            <person name="Yamagawa M."/>
            <person name="Roy P."/>
        </authorList>
    </citation>
    <scope>NUCLEOTIDE SEQUENCE [GENOMIC RNA]</scope>
    <source>
        <strain>Vaccine</strain>
    </source>
</reference>
<reference key="2">
    <citation type="journal article" date="1994" name="J. Vet. Med. Sci.">
        <title>The complete sequences of African horsesickness virus serotype 4 (vaccine strain) RNA segment 2 and 6 which encode outer capsid protein.</title>
        <authorList>
            <person name="Sakamoto K."/>
            <person name="Mizukoshi N."/>
            <person name="Apiwatnakorn B."/>
            <person name="Iwata A."/>
            <person name="Tsuchiya T."/>
            <person name="Ueda S."/>
            <person name="Imagawa H."/>
            <person name="Sugiura T."/>
            <person name="Kamada M."/>
            <person name="Fukusho A."/>
        </authorList>
    </citation>
    <scope>NUCLEOTIDE SEQUENCE [GENOMIC RNA]</scope>
    <source>
        <strain>Vaccine</strain>
    </source>
</reference>
<reference key="3">
    <citation type="submission" date="1995-03" db="EMBL/GenBank/DDBJ databases">
        <authorList>
            <person name="Stone-Marschat M."/>
        </authorList>
    </citation>
    <scope>NUCLEOTIDE SEQUENCE [GENOMIC RNA]</scope>
    <source>
        <strain>Plum Island</strain>
    </source>
</reference>
<reference key="4">
    <citation type="submission" date="1992-05" db="EMBL/GenBank/DDBJ databases">
        <authorList>
            <person name="Martinez Torrecuadrada J.L."/>
            <person name="Ranz A."/>
            <person name="Diez J."/>
            <person name="Martinez C."/>
            <person name="Sanz A."/>
            <person name="Casal J.I."/>
        </authorList>
    </citation>
    <scope>NUCLEOTIDE SEQUENCE [GENOMIC RNA]</scope>
    <source>
        <strain>Vaccine</strain>
    </source>
</reference>
<proteinExistence type="inferred from homology"/>
<name>VP2_AHSV4</name>
<organism>
    <name type="scientific">African horse sickness virus 4</name>
    <name type="common">AHSV-4</name>
    <dbReference type="NCBI Taxonomy" id="36421"/>
    <lineage>
        <taxon>Viruses</taxon>
        <taxon>Riboviria</taxon>
        <taxon>Orthornavirae</taxon>
        <taxon>Duplornaviricota</taxon>
        <taxon>Resentoviricetes</taxon>
        <taxon>Reovirales</taxon>
        <taxon>Sedoreoviridae</taxon>
        <taxon>Orbivirus</taxon>
        <taxon>African horse sickness virus</taxon>
    </lineage>
</organism>
<sequence>MASEFGILMTNEKFDPSLEKTICDVIVTKKGRVKHKEVDGVCGYEWDETNHRFGLCEVEHDMSISEFMYNEIRCEGAYPIFPRYIIDTLKYEKFIDRNDHQIRVDRDDNEMRKILIQPYAGEMYFSPECYPSVFLRREARSQKLDRIRNYIGKRVEFYEEESKRKAILDQNKMSKVEQWRDAVNERIVSIEPKRGECYDHGTDIIYQFIKKLRFGMMYPHYYVLHSDYCIVPNKGGTSIGSWHIRKRTEGDAKASAMYSGKGPLNDLRVKIERDDLSRETIIQIIEYGKKFNSSAGDKQGNISIEKLVEYCDFLTTFVHAKKKEEGEDDTARQEIRKAWVKGMPYMDFSKPMKITRGFNRNMLFFAALDSFRKRNGVDVDPNKGKWKEHIKEVTEKLKKAQTENGGQPCQVSIDGVNVLTNVDYGTVNHWIDWVTDIIMVVQTKRLVKEYAFKKLKSENLLAGMNSLVGVLRCYMYCLALAIYDFYEGTIDGFKKGSNASAIIETVAQMFPDFRRELVEKFGIDLRMKEITRELFVGKSMTSKFMEEGEYGYKFAYGWRRDGFAVMEDYGEILTEKVEDLYKGVLLGRKWEDEVDDPESYFYDDLYTNEPHRVFLSAGKDVDNNITLRSISQAETTYLSKRFVSYWYRISQVEVTKARNEVLDMNEKQKPYFEFEYDDFKPCSIGELGIHASTYIYQNLLVGRNRGEEILDSKELVWMDMSLLNFGAVRSHDRCWISSSVAIEVNLRHALIVRIFSRFDMMSERETFSTILEKVMEDVKKLRFFPTYRHYYLETLQRVFNDERRLEVDDFYMRLYDVQTREQALNTFTDFHRCVESELLLPTLKLNFLLWIVFEMENVEVNAAYKRHPLLISTAKGLRVIGVDIFNSQLSISMSGWIPYVERMCAESKVQTKLTADELKLKRWFISYYTTLKLDRRAEPRMSFKFEGLSTWIGSNCGGVRDYVIQMLPTRKPKPGALMVVYARDSRIEWIEAELSQWLQMEGSLGLILVHDSGIINKSVLRARTLKIYNRGSMDTLILISSGVYTFGNKFLLSKLLAKTE</sequence>
<keyword id="KW-0167">Capsid protein</keyword>
<keyword id="KW-1153">Inner capsid protein</keyword>
<keyword id="KW-0946">Virion</keyword>
<gene>
    <name type="primary">Segment-2</name>
    <name type="synonym">L2</name>
</gene>
<accession>P32553</accession>
<accession>Q64910</accession>
<accession>Q64925</accession>
<accession>Q64927</accession>